<evidence type="ECO:0000255" key="1">
    <source>
        <dbReference type="HAMAP-Rule" id="MF_01522"/>
    </source>
</evidence>
<keyword id="KW-0997">Cell inner membrane</keyword>
<keyword id="KW-1003">Cell membrane</keyword>
<keyword id="KW-0406">Ion transport</keyword>
<keyword id="KW-0472">Membrane</keyword>
<keyword id="KW-0630">Potassium</keyword>
<keyword id="KW-0633">Potassium transport</keyword>
<keyword id="KW-0769">Symport</keyword>
<keyword id="KW-0812">Transmembrane</keyword>
<keyword id="KW-1133">Transmembrane helix</keyword>
<keyword id="KW-0813">Transport</keyword>
<organism>
    <name type="scientific">Shigella boydii serotype 4 (strain Sb227)</name>
    <dbReference type="NCBI Taxonomy" id="300268"/>
    <lineage>
        <taxon>Bacteria</taxon>
        <taxon>Pseudomonadati</taxon>
        <taxon>Pseudomonadota</taxon>
        <taxon>Gammaproteobacteria</taxon>
        <taxon>Enterobacterales</taxon>
        <taxon>Enterobacteriaceae</taxon>
        <taxon>Shigella</taxon>
    </lineage>
</organism>
<feature type="chain" id="PRO_0000279828" description="Low affinity potassium transport system protein Kup">
    <location>
        <begin position="1"/>
        <end position="622"/>
    </location>
</feature>
<feature type="transmembrane region" description="Helical" evidence="1">
    <location>
        <begin position="9"/>
        <end position="29"/>
    </location>
</feature>
<feature type="transmembrane region" description="Helical" evidence="1">
    <location>
        <begin position="49"/>
        <end position="69"/>
    </location>
</feature>
<feature type="transmembrane region" description="Helical" evidence="1">
    <location>
        <begin position="103"/>
        <end position="123"/>
    </location>
</feature>
<feature type="transmembrane region" description="Helical" evidence="1">
    <location>
        <begin position="137"/>
        <end position="157"/>
    </location>
</feature>
<feature type="transmembrane region" description="Helical" evidence="1">
    <location>
        <begin position="165"/>
        <end position="185"/>
    </location>
</feature>
<feature type="transmembrane region" description="Helical" evidence="1">
    <location>
        <begin position="213"/>
        <end position="233"/>
    </location>
</feature>
<feature type="transmembrane region" description="Helical" evidence="1">
    <location>
        <begin position="247"/>
        <end position="267"/>
    </location>
</feature>
<feature type="transmembrane region" description="Helical" evidence="1">
    <location>
        <begin position="276"/>
        <end position="296"/>
    </location>
</feature>
<feature type="transmembrane region" description="Helical" evidence="1">
    <location>
        <begin position="337"/>
        <end position="357"/>
    </location>
</feature>
<feature type="transmembrane region" description="Helical" evidence="1">
    <location>
        <begin position="363"/>
        <end position="383"/>
    </location>
</feature>
<feature type="transmembrane region" description="Helical" evidence="1">
    <location>
        <begin position="396"/>
        <end position="416"/>
    </location>
</feature>
<feature type="transmembrane region" description="Helical" evidence="1">
    <location>
        <begin position="419"/>
        <end position="439"/>
    </location>
</feature>
<comment type="function">
    <text evidence="1">Responsible for the low-affinity transport of potassium into the cell. Likely operates as a K(+):H(+) symporter.</text>
</comment>
<comment type="catalytic activity">
    <reaction evidence="1">
        <text>K(+)(in) + H(+)(in) = K(+)(out) + H(+)(out)</text>
        <dbReference type="Rhea" id="RHEA:28490"/>
        <dbReference type="ChEBI" id="CHEBI:15378"/>
        <dbReference type="ChEBI" id="CHEBI:29103"/>
    </reaction>
    <physiologicalReaction direction="right-to-left" evidence="1">
        <dbReference type="Rhea" id="RHEA:28492"/>
    </physiologicalReaction>
</comment>
<comment type="subcellular location">
    <subcellularLocation>
        <location evidence="1">Cell inner membrane</location>
        <topology evidence="1">Multi-pass membrane protein</topology>
    </subcellularLocation>
</comment>
<comment type="similarity">
    <text evidence="1">Belongs to the HAK/KUP transporter (TC 2.A.72) family.</text>
</comment>
<gene>
    <name evidence="1" type="primary">kup</name>
    <name type="ordered locus">SBO_3761</name>
</gene>
<sequence>MSTDNKQSLPAITLAAIGVVYGDIGTSPLYTLRECLSGQFGFGVERDAVFGFLSLIFWLLIFVVSIKYLTFVMRADNAGEGGILTLMSLAGRNTSARTTSMLVIMGLIGGSFFYGEVVITPAISVMSAIEGLEIVAPQLDTWIVPLSIIVLTLLFMIQKHGTAMVGKLFAPIMLTWFLILAGLGLRSIIANPEVLHALNPMWAVHFFLEYKTVSFIALGAVVLSITGVEALYADMGHFGKFPIRLAWFTVVLPSLTLNYFGQGALLLKNPEAIKNPFFLLAPDWALIPLLIIAALATVIASQAVISGVFSLTRQAVRLGYLSPMRIIHTSEMESGQIYIPFVNWMLYVAVVIVIVSFEHSSNLAAAYGIAVTGTMVLTSILSTTVARQNWHWNKYFVALILIAFLCVDIPLFTANLDKLLSGGWLPLSLGTVMFIVMTTWKSERFRLLRRMHEHGNSLEAMIASLEKSPPVRVPGTAVYMSRAINVIPFALMHNLKHNKVLHERVILLTLRTEDAPYVHNVRRVQIEQLSLTFWRVVASYGWRETPNVEEVFHRCGLEGLSCRMMETSFFMSHESLILGKRPWYLRLRGKLYLLLQRNALRAPDQFEIPPNRVIELGTQVEI</sequence>
<name>KUP_SHIBS</name>
<dbReference type="EMBL" id="CP000036">
    <property type="protein sequence ID" value="ABB68232.1"/>
    <property type="molecule type" value="Genomic_DNA"/>
</dbReference>
<dbReference type="RefSeq" id="WP_000102317.1">
    <property type="nucleotide sequence ID" value="NC_007613.1"/>
</dbReference>
<dbReference type="KEGG" id="sbo:SBO_3761"/>
<dbReference type="HOGENOM" id="CLU_008142_4_2_6"/>
<dbReference type="Proteomes" id="UP000007067">
    <property type="component" value="Chromosome"/>
</dbReference>
<dbReference type="GO" id="GO:0005886">
    <property type="term" value="C:plasma membrane"/>
    <property type="evidence" value="ECO:0007669"/>
    <property type="project" value="UniProtKB-SubCell"/>
</dbReference>
<dbReference type="GO" id="GO:0015079">
    <property type="term" value="F:potassium ion transmembrane transporter activity"/>
    <property type="evidence" value="ECO:0007669"/>
    <property type="project" value="UniProtKB-UniRule"/>
</dbReference>
<dbReference type="GO" id="GO:0015293">
    <property type="term" value="F:symporter activity"/>
    <property type="evidence" value="ECO:0007669"/>
    <property type="project" value="UniProtKB-UniRule"/>
</dbReference>
<dbReference type="HAMAP" id="MF_01522">
    <property type="entry name" value="Kup"/>
    <property type="match status" value="1"/>
</dbReference>
<dbReference type="InterPro" id="IPR003855">
    <property type="entry name" value="K+_transporter"/>
</dbReference>
<dbReference type="InterPro" id="IPR053952">
    <property type="entry name" value="K_trans_C"/>
</dbReference>
<dbReference type="InterPro" id="IPR053951">
    <property type="entry name" value="K_trans_N"/>
</dbReference>
<dbReference type="InterPro" id="IPR023051">
    <property type="entry name" value="Kup"/>
</dbReference>
<dbReference type="NCBIfam" id="TIGR00794">
    <property type="entry name" value="kup"/>
    <property type="match status" value="1"/>
</dbReference>
<dbReference type="NCBIfam" id="NF008015">
    <property type="entry name" value="PRK10745.1"/>
    <property type="match status" value="1"/>
</dbReference>
<dbReference type="PANTHER" id="PTHR30540:SF79">
    <property type="entry name" value="LOW AFFINITY POTASSIUM TRANSPORT SYSTEM PROTEIN KUP"/>
    <property type="match status" value="1"/>
</dbReference>
<dbReference type="PANTHER" id="PTHR30540">
    <property type="entry name" value="OSMOTIC STRESS POTASSIUM TRANSPORTER"/>
    <property type="match status" value="1"/>
</dbReference>
<dbReference type="Pfam" id="PF02705">
    <property type="entry name" value="K_trans"/>
    <property type="match status" value="1"/>
</dbReference>
<dbReference type="Pfam" id="PF22776">
    <property type="entry name" value="K_trans_C"/>
    <property type="match status" value="1"/>
</dbReference>
<reference key="1">
    <citation type="journal article" date="2005" name="Nucleic Acids Res.">
        <title>Genome dynamics and diversity of Shigella species, the etiologic agents of bacillary dysentery.</title>
        <authorList>
            <person name="Yang F."/>
            <person name="Yang J."/>
            <person name="Zhang X."/>
            <person name="Chen L."/>
            <person name="Jiang Y."/>
            <person name="Yan Y."/>
            <person name="Tang X."/>
            <person name="Wang J."/>
            <person name="Xiong Z."/>
            <person name="Dong J."/>
            <person name="Xue Y."/>
            <person name="Zhu Y."/>
            <person name="Xu X."/>
            <person name="Sun L."/>
            <person name="Chen S."/>
            <person name="Nie H."/>
            <person name="Peng J."/>
            <person name="Xu J."/>
            <person name="Wang Y."/>
            <person name="Yuan Z."/>
            <person name="Wen Y."/>
            <person name="Yao Z."/>
            <person name="Shen Y."/>
            <person name="Qiang B."/>
            <person name="Hou Y."/>
            <person name="Yu J."/>
            <person name="Jin Q."/>
        </authorList>
    </citation>
    <scope>NUCLEOTIDE SEQUENCE [LARGE SCALE GENOMIC DNA]</scope>
    <source>
        <strain>Sb227</strain>
    </source>
</reference>
<protein>
    <recommendedName>
        <fullName evidence="1">Low affinity potassium transport system protein Kup</fullName>
    </recommendedName>
    <alternativeName>
        <fullName evidence="1">Kup system potassium uptake protein</fullName>
    </alternativeName>
</protein>
<proteinExistence type="inferred from homology"/>
<accession>Q31UM6</accession>